<sequence length="213" mass="22944">MQTYQKDFIDFVIGCEVLRFGEFTLKSGRQSPYFFNAGLFNTGARLGRLGEFYAQTLTSGGIRADVLYGPAYKGIPLVAATAIALARVSGEEIPYAFNRKEAKDHGEGGTLVGAPLQGEVLIVDDVITAGTSVRESIEIIRGAGARPCGVLIALDREEIGQSGKSAVEEVQDSLGIPVHAIVGFRHLIDYLRGSGRVRELAALEDYRSRYGTA</sequence>
<evidence type="ECO:0000255" key="1">
    <source>
        <dbReference type="HAMAP-Rule" id="MF_01208"/>
    </source>
</evidence>
<evidence type="ECO:0000305" key="2"/>
<name>PYRE_METCA</name>
<comment type="function">
    <text evidence="1">Catalyzes the transfer of a ribosyl phosphate group from 5-phosphoribose 1-diphosphate to orotate, leading to the formation of orotidine monophosphate (OMP).</text>
</comment>
<comment type="catalytic activity">
    <reaction evidence="1">
        <text>orotidine 5'-phosphate + diphosphate = orotate + 5-phospho-alpha-D-ribose 1-diphosphate</text>
        <dbReference type="Rhea" id="RHEA:10380"/>
        <dbReference type="ChEBI" id="CHEBI:30839"/>
        <dbReference type="ChEBI" id="CHEBI:33019"/>
        <dbReference type="ChEBI" id="CHEBI:57538"/>
        <dbReference type="ChEBI" id="CHEBI:58017"/>
        <dbReference type="EC" id="2.4.2.10"/>
    </reaction>
</comment>
<comment type="cofactor">
    <cofactor evidence="1">
        <name>Mg(2+)</name>
        <dbReference type="ChEBI" id="CHEBI:18420"/>
    </cofactor>
</comment>
<comment type="pathway">
    <text evidence="1">Pyrimidine metabolism; UMP biosynthesis via de novo pathway; UMP from orotate: step 1/2.</text>
</comment>
<comment type="subunit">
    <text evidence="1">Homodimer.</text>
</comment>
<comment type="similarity">
    <text evidence="1">Belongs to the purine/pyrimidine phosphoribosyltransferase family. PyrE subfamily.</text>
</comment>
<reference key="1">
    <citation type="journal article" date="2002" name="Arch. Microbiol.">
        <title>The ribulose-1,5-bisphosphate carboxylase/oxygenase gene cluster of Methylococcus capsulatus (Bath).</title>
        <authorList>
            <person name="Baxter N.J."/>
            <person name="Hirt R.P."/>
            <person name="Bodrossy L."/>
            <person name="Kovacs K.L."/>
            <person name="Embley T.M."/>
            <person name="Prosser J.I."/>
            <person name="Murrell J.C."/>
        </authorList>
    </citation>
    <scope>NUCLEOTIDE SEQUENCE [GENOMIC DNA]</scope>
    <source>
        <strain>ATCC 33009 / NCIMB 11132 / Bath</strain>
    </source>
</reference>
<reference key="2">
    <citation type="journal article" date="2004" name="PLoS Biol.">
        <title>Genomic insights into methanotrophy: the complete genome sequence of Methylococcus capsulatus (Bath).</title>
        <authorList>
            <person name="Ward N.L."/>
            <person name="Larsen O."/>
            <person name="Sakwa J."/>
            <person name="Bruseth L."/>
            <person name="Khouri H.M."/>
            <person name="Durkin A.S."/>
            <person name="Dimitrov G."/>
            <person name="Jiang L."/>
            <person name="Scanlan D."/>
            <person name="Kang K.H."/>
            <person name="Lewis M.R."/>
            <person name="Nelson K.E."/>
            <person name="Methe B.A."/>
            <person name="Wu M."/>
            <person name="Heidelberg J.F."/>
            <person name="Paulsen I.T."/>
            <person name="Fouts D.E."/>
            <person name="Ravel J."/>
            <person name="Tettelin H."/>
            <person name="Ren Q."/>
            <person name="Read T.D."/>
            <person name="DeBoy R.T."/>
            <person name="Seshadri R."/>
            <person name="Salzberg S.L."/>
            <person name="Jensen H.B."/>
            <person name="Birkeland N.K."/>
            <person name="Nelson W.C."/>
            <person name="Dodson R.J."/>
            <person name="Grindhaug S.H."/>
            <person name="Holt I.E."/>
            <person name="Eidhammer I."/>
            <person name="Jonasen I."/>
            <person name="Vanaken S."/>
            <person name="Utterback T.R."/>
            <person name="Feldblyum T.V."/>
            <person name="Fraser C.M."/>
            <person name="Lillehaug J.R."/>
            <person name="Eisen J.A."/>
        </authorList>
    </citation>
    <scope>NUCLEOTIDE SEQUENCE [LARGE SCALE GENOMIC DNA]</scope>
    <source>
        <strain>ATCC 33009 / NCIMB 11132 / Bath</strain>
    </source>
</reference>
<organism>
    <name type="scientific">Methylococcus capsulatus (strain ATCC 33009 / NCIMB 11132 / Bath)</name>
    <dbReference type="NCBI Taxonomy" id="243233"/>
    <lineage>
        <taxon>Bacteria</taxon>
        <taxon>Pseudomonadati</taxon>
        <taxon>Pseudomonadota</taxon>
        <taxon>Gammaproteobacteria</taxon>
        <taxon>Methylococcales</taxon>
        <taxon>Methylococcaceae</taxon>
        <taxon>Methylococcus</taxon>
    </lineage>
</organism>
<feature type="chain" id="PRO_0000110709" description="Orotate phosphoribosyltransferase">
    <location>
        <begin position="1"/>
        <end position="213"/>
    </location>
</feature>
<feature type="binding site" description="in other chain" evidence="1">
    <location>
        <position position="26"/>
    </location>
    <ligand>
        <name>5-phospho-alpha-D-ribose 1-diphosphate</name>
        <dbReference type="ChEBI" id="CHEBI:58017"/>
        <note>ligand shared between dimeric partners</note>
    </ligand>
</feature>
<feature type="binding site" evidence="1">
    <location>
        <begin position="34"/>
        <end position="35"/>
    </location>
    <ligand>
        <name>orotate</name>
        <dbReference type="ChEBI" id="CHEBI:30839"/>
    </ligand>
</feature>
<feature type="binding site" description="in other chain" evidence="1">
    <location>
        <begin position="72"/>
        <end position="73"/>
    </location>
    <ligand>
        <name>5-phospho-alpha-D-ribose 1-diphosphate</name>
        <dbReference type="ChEBI" id="CHEBI:58017"/>
        <note>ligand shared between dimeric partners</note>
    </ligand>
</feature>
<feature type="binding site" evidence="1">
    <location>
        <position position="99"/>
    </location>
    <ligand>
        <name>5-phospho-alpha-D-ribose 1-diphosphate</name>
        <dbReference type="ChEBI" id="CHEBI:58017"/>
        <note>ligand shared between dimeric partners</note>
    </ligand>
</feature>
<feature type="binding site" description="in other chain" evidence="1">
    <location>
        <position position="100"/>
    </location>
    <ligand>
        <name>5-phospho-alpha-D-ribose 1-diphosphate</name>
        <dbReference type="ChEBI" id="CHEBI:58017"/>
        <note>ligand shared between dimeric partners</note>
    </ligand>
</feature>
<feature type="binding site" evidence="1">
    <location>
        <position position="103"/>
    </location>
    <ligand>
        <name>5-phospho-alpha-D-ribose 1-diphosphate</name>
        <dbReference type="ChEBI" id="CHEBI:58017"/>
        <note>ligand shared between dimeric partners</note>
    </ligand>
</feature>
<feature type="binding site" evidence="1">
    <location>
        <position position="105"/>
    </location>
    <ligand>
        <name>5-phospho-alpha-D-ribose 1-diphosphate</name>
        <dbReference type="ChEBI" id="CHEBI:58017"/>
        <note>ligand shared between dimeric partners</note>
    </ligand>
</feature>
<feature type="binding site" description="in other chain" evidence="1">
    <location>
        <begin position="124"/>
        <end position="132"/>
    </location>
    <ligand>
        <name>5-phospho-alpha-D-ribose 1-diphosphate</name>
        <dbReference type="ChEBI" id="CHEBI:58017"/>
        <note>ligand shared between dimeric partners</note>
    </ligand>
</feature>
<feature type="binding site" evidence="1">
    <location>
        <position position="128"/>
    </location>
    <ligand>
        <name>orotate</name>
        <dbReference type="ChEBI" id="CHEBI:30839"/>
    </ligand>
</feature>
<feature type="binding site" evidence="1">
    <location>
        <position position="156"/>
    </location>
    <ligand>
        <name>orotate</name>
        <dbReference type="ChEBI" id="CHEBI:30839"/>
    </ligand>
</feature>
<feature type="sequence conflict" description="In Ref. 1; AAL40977." evidence="2" ref="1">
    <original>VHAIVGFRHLIDYLRGSGRVRELAALEDYRSRYGTA</original>
    <variation>HPACPA</variation>
    <location>
        <begin position="178"/>
        <end position="213"/>
    </location>
</feature>
<accession>Q8VR31</accession>
<accession>Q603R0</accession>
<keyword id="KW-0328">Glycosyltransferase</keyword>
<keyword id="KW-0460">Magnesium</keyword>
<keyword id="KW-0665">Pyrimidine biosynthesis</keyword>
<keyword id="KW-1185">Reference proteome</keyword>
<keyword id="KW-0808">Transferase</keyword>
<gene>
    <name evidence="1" type="primary">pyrE</name>
    <name type="ordered locus">MCA2740</name>
</gene>
<protein>
    <recommendedName>
        <fullName evidence="1">Orotate phosphoribosyltransferase</fullName>
        <shortName evidence="1">OPRT</shortName>
        <shortName evidence="1">OPRTase</shortName>
        <ecNumber evidence="1">2.4.2.10</ecNumber>
    </recommendedName>
</protein>
<dbReference type="EC" id="2.4.2.10" evidence="1"/>
<dbReference type="EMBL" id="AF447860">
    <property type="protein sequence ID" value="AAL40977.1"/>
    <property type="molecule type" value="Genomic_DNA"/>
</dbReference>
<dbReference type="EMBL" id="AE017282">
    <property type="protein sequence ID" value="AAU91179.1"/>
    <property type="molecule type" value="Genomic_DNA"/>
</dbReference>
<dbReference type="RefSeq" id="WP_010961946.1">
    <property type="nucleotide sequence ID" value="NC_002977.6"/>
</dbReference>
<dbReference type="SMR" id="Q8VR31"/>
<dbReference type="STRING" id="243233.MCA2740"/>
<dbReference type="GeneID" id="88224920"/>
<dbReference type="KEGG" id="mca:MCA2740"/>
<dbReference type="eggNOG" id="COG0461">
    <property type="taxonomic scope" value="Bacteria"/>
</dbReference>
<dbReference type="HOGENOM" id="CLU_074878_0_1_6"/>
<dbReference type="UniPathway" id="UPA00070">
    <property type="reaction ID" value="UER00119"/>
</dbReference>
<dbReference type="Proteomes" id="UP000006821">
    <property type="component" value="Chromosome"/>
</dbReference>
<dbReference type="GO" id="GO:0005737">
    <property type="term" value="C:cytoplasm"/>
    <property type="evidence" value="ECO:0007669"/>
    <property type="project" value="TreeGrafter"/>
</dbReference>
<dbReference type="GO" id="GO:0000287">
    <property type="term" value="F:magnesium ion binding"/>
    <property type="evidence" value="ECO:0007669"/>
    <property type="project" value="UniProtKB-UniRule"/>
</dbReference>
<dbReference type="GO" id="GO:0004588">
    <property type="term" value="F:orotate phosphoribosyltransferase activity"/>
    <property type="evidence" value="ECO:0007669"/>
    <property type="project" value="UniProtKB-UniRule"/>
</dbReference>
<dbReference type="GO" id="GO:0006207">
    <property type="term" value="P:'de novo' pyrimidine nucleobase biosynthetic process"/>
    <property type="evidence" value="ECO:0007669"/>
    <property type="project" value="TreeGrafter"/>
</dbReference>
<dbReference type="GO" id="GO:0044205">
    <property type="term" value="P:'de novo' UMP biosynthetic process"/>
    <property type="evidence" value="ECO:0007669"/>
    <property type="project" value="UniProtKB-UniRule"/>
</dbReference>
<dbReference type="GO" id="GO:0046132">
    <property type="term" value="P:pyrimidine ribonucleoside biosynthetic process"/>
    <property type="evidence" value="ECO:0007669"/>
    <property type="project" value="TreeGrafter"/>
</dbReference>
<dbReference type="CDD" id="cd06223">
    <property type="entry name" value="PRTases_typeI"/>
    <property type="match status" value="1"/>
</dbReference>
<dbReference type="FunFam" id="3.40.50.2020:FF:000008">
    <property type="entry name" value="Orotate phosphoribosyltransferase"/>
    <property type="match status" value="1"/>
</dbReference>
<dbReference type="Gene3D" id="3.40.50.2020">
    <property type="match status" value="1"/>
</dbReference>
<dbReference type="HAMAP" id="MF_01208">
    <property type="entry name" value="PyrE"/>
    <property type="match status" value="1"/>
</dbReference>
<dbReference type="InterPro" id="IPR023031">
    <property type="entry name" value="OPRT"/>
</dbReference>
<dbReference type="InterPro" id="IPR004467">
    <property type="entry name" value="Or_phspho_trans_dom"/>
</dbReference>
<dbReference type="InterPro" id="IPR000836">
    <property type="entry name" value="PRibTrfase_dom"/>
</dbReference>
<dbReference type="InterPro" id="IPR029057">
    <property type="entry name" value="PRTase-like"/>
</dbReference>
<dbReference type="NCBIfam" id="TIGR00336">
    <property type="entry name" value="pyrE"/>
    <property type="match status" value="1"/>
</dbReference>
<dbReference type="PANTHER" id="PTHR46683">
    <property type="entry name" value="OROTATE PHOSPHORIBOSYLTRANSFERASE 1-RELATED"/>
    <property type="match status" value="1"/>
</dbReference>
<dbReference type="PANTHER" id="PTHR46683:SF1">
    <property type="entry name" value="OROTATE PHOSPHORIBOSYLTRANSFERASE 1-RELATED"/>
    <property type="match status" value="1"/>
</dbReference>
<dbReference type="Pfam" id="PF00156">
    <property type="entry name" value="Pribosyltran"/>
    <property type="match status" value="1"/>
</dbReference>
<dbReference type="SUPFAM" id="SSF53271">
    <property type="entry name" value="PRTase-like"/>
    <property type="match status" value="1"/>
</dbReference>
<dbReference type="PROSITE" id="PS00103">
    <property type="entry name" value="PUR_PYR_PR_TRANSFER"/>
    <property type="match status" value="1"/>
</dbReference>
<proteinExistence type="inferred from homology"/>